<sequence>MKTGIVTTLIALCLPVSVFATTLRLSTDVDLLVLDGKKVSSSLLRGADSIELDNGPHQLVFRVEKTIHLSNSEERLYISPPLVVSFNTQLINQVNFRLPRLENEREANHFDAAPRLELLDGDATPIPVKLDILAITSTAKTIDYEVEVERYNKSAKRASLPQFATMMADDSTLLSGVSELDAIPPQSQVLTEQRLKYWFKLADPQTRNTFLQWAEKQPSS</sequence>
<accession>B2TTT0</accession>
<organism>
    <name type="scientific">Shigella boydii serotype 18 (strain CDC 3083-94 / BS512)</name>
    <dbReference type="NCBI Taxonomy" id="344609"/>
    <lineage>
        <taxon>Bacteria</taxon>
        <taxon>Pseudomonadati</taxon>
        <taxon>Pseudomonadota</taxon>
        <taxon>Gammaproteobacteria</taxon>
        <taxon>Enterobacterales</taxon>
        <taxon>Enterobacteriaceae</taxon>
        <taxon>Shigella</taxon>
    </lineage>
</organism>
<proteinExistence type="inferred from homology"/>
<gene>
    <name evidence="1" type="primary">yccT</name>
    <name type="ordered locus">SbBS512_E2351</name>
</gene>
<comment type="similarity">
    <text evidence="1">Belongs to the UPF0319 family.</text>
</comment>
<name>YCCT_SHIB3</name>
<dbReference type="EMBL" id="CP001063">
    <property type="protein sequence ID" value="ACD06986.1"/>
    <property type="molecule type" value="Genomic_DNA"/>
</dbReference>
<dbReference type="RefSeq" id="WP_000847791.1">
    <property type="nucleotide sequence ID" value="NC_010658.1"/>
</dbReference>
<dbReference type="STRING" id="344609.SbBS512_E2351"/>
<dbReference type="KEGG" id="sbc:SbBS512_E2351"/>
<dbReference type="HOGENOM" id="CLU_073782_2_0_6"/>
<dbReference type="Proteomes" id="UP000001030">
    <property type="component" value="Chromosome"/>
</dbReference>
<dbReference type="HAMAP" id="MF_00789">
    <property type="entry name" value="UPF0319"/>
    <property type="match status" value="1"/>
</dbReference>
<dbReference type="InterPro" id="IPR018635">
    <property type="entry name" value="UPF0319"/>
</dbReference>
<dbReference type="NCBIfam" id="NF047712">
    <property type="entry name" value="CrliSynInhib"/>
    <property type="match status" value="1"/>
</dbReference>
<dbReference type="NCBIfam" id="NF002967">
    <property type="entry name" value="PRK03641.1"/>
    <property type="match status" value="1"/>
</dbReference>
<dbReference type="PANTHER" id="PTHR38108">
    <property type="entry name" value="UPF0319 PROTEIN YCCT"/>
    <property type="match status" value="1"/>
</dbReference>
<dbReference type="PANTHER" id="PTHR38108:SF1">
    <property type="entry name" value="UPF0319 PROTEIN YCCT"/>
    <property type="match status" value="1"/>
</dbReference>
<dbReference type="Pfam" id="PF09829">
    <property type="entry name" value="DUF2057"/>
    <property type="match status" value="1"/>
</dbReference>
<protein>
    <recommendedName>
        <fullName evidence="1">UPF0319 protein YccT</fullName>
    </recommendedName>
</protein>
<keyword id="KW-1185">Reference proteome</keyword>
<keyword id="KW-0732">Signal</keyword>
<reference key="1">
    <citation type="submission" date="2008-05" db="EMBL/GenBank/DDBJ databases">
        <title>Complete sequence of Shigella boydii serotype 18 strain BS512.</title>
        <authorList>
            <person name="Rasko D.A."/>
            <person name="Rosovitz M."/>
            <person name="Maurelli A.T."/>
            <person name="Myers G."/>
            <person name="Seshadri R."/>
            <person name="Cer R."/>
            <person name="Jiang L."/>
            <person name="Ravel J."/>
            <person name="Sebastian Y."/>
        </authorList>
    </citation>
    <scope>NUCLEOTIDE SEQUENCE [LARGE SCALE GENOMIC DNA]</scope>
    <source>
        <strain>CDC 3083-94 / BS512</strain>
    </source>
</reference>
<evidence type="ECO:0000255" key="1">
    <source>
        <dbReference type="HAMAP-Rule" id="MF_00789"/>
    </source>
</evidence>
<feature type="signal peptide" evidence="1">
    <location>
        <begin position="1"/>
        <end position="20"/>
    </location>
</feature>
<feature type="chain" id="PRO_1000200499" description="UPF0319 protein YccT">
    <location>
        <begin position="21"/>
        <end position="220"/>
    </location>
</feature>